<organism>
    <name type="scientific">Metallosphaera sedula (strain ATCC 51363 / DSM 5348 / JCM 9185 / NBRC 15509 / TH2)</name>
    <dbReference type="NCBI Taxonomy" id="399549"/>
    <lineage>
        <taxon>Archaea</taxon>
        <taxon>Thermoproteota</taxon>
        <taxon>Thermoprotei</taxon>
        <taxon>Sulfolobales</taxon>
        <taxon>Sulfolobaceae</taxon>
        <taxon>Metallosphaera</taxon>
    </lineage>
</organism>
<gene>
    <name evidence="1" type="primary">eno</name>
    <name type="ordered locus">Msed_1668</name>
</gene>
<feature type="chain" id="PRO_1000072009" description="Enolase">
    <location>
        <begin position="1"/>
        <end position="416"/>
    </location>
</feature>
<feature type="active site" description="Proton donor" evidence="1">
    <location>
        <position position="204"/>
    </location>
</feature>
<feature type="active site" description="Proton acceptor" evidence="1">
    <location>
        <position position="333"/>
    </location>
</feature>
<feature type="binding site" evidence="1">
    <location>
        <position position="160"/>
    </location>
    <ligand>
        <name>(2R)-2-phosphoglycerate</name>
        <dbReference type="ChEBI" id="CHEBI:58289"/>
    </ligand>
</feature>
<feature type="binding site" evidence="1">
    <location>
        <position position="239"/>
    </location>
    <ligand>
        <name>Mg(2+)</name>
        <dbReference type="ChEBI" id="CHEBI:18420"/>
    </ligand>
</feature>
<feature type="binding site" evidence="1">
    <location>
        <position position="282"/>
    </location>
    <ligand>
        <name>Mg(2+)</name>
        <dbReference type="ChEBI" id="CHEBI:18420"/>
    </ligand>
</feature>
<feature type="binding site" evidence="1">
    <location>
        <position position="308"/>
    </location>
    <ligand>
        <name>Mg(2+)</name>
        <dbReference type="ChEBI" id="CHEBI:18420"/>
    </ligand>
</feature>
<feature type="binding site" evidence="1">
    <location>
        <position position="333"/>
    </location>
    <ligand>
        <name>(2R)-2-phosphoglycerate</name>
        <dbReference type="ChEBI" id="CHEBI:58289"/>
    </ligand>
</feature>
<feature type="binding site" evidence="1">
    <location>
        <position position="362"/>
    </location>
    <ligand>
        <name>(2R)-2-phosphoglycerate</name>
        <dbReference type="ChEBI" id="CHEBI:58289"/>
    </ligand>
</feature>
<feature type="binding site" evidence="1">
    <location>
        <position position="363"/>
    </location>
    <ligand>
        <name>(2R)-2-phosphoglycerate</name>
        <dbReference type="ChEBI" id="CHEBI:58289"/>
    </ligand>
</feature>
<feature type="binding site" evidence="1">
    <location>
        <position position="384"/>
    </location>
    <ligand>
        <name>(2R)-2-phosphoglycerate</name>
        <dbReference type="ChEBI" id="CHEBI:58289"/>
    </ligand>
</feature>
<proteinExistence type="inferred from homology"/>
<accession>A4YHC1</accession>
<name>ENO_METS5</name>
<evidence type="ECO:0000255" key="1">
    <source>
        <dbReference type="HAMAP-Rule" id="MF_00318"/>
    </source>
</evidence>
<dbReference type="EC" id="4.2.1.11" evidence="1"/>
<dbReference type="EMBL" id="CP000682">
    <property type="protein sequence ID" value="ABP95823.1"/>
    <property type="molecule type" value="Genomic_DNA"/>
</dbReference>
<dbReference type="RefSeq" id="WP_012021610.1">
    <property type="nucleotide sequence ID" value="NC_009440.1"/>
</dbReference>
<dbReference type="SMR" id="A4YHC1"/>
<dbReference type="STRING" id="399549.Msed_1668"/>
<dbReference type="GeneID" id="91756180"/>
<dbReference type="KEGG" id="mse:Msed_1668"/>
<dbReference type="eggNOG" id="arCOG01169">
    <property type="taxonomic scope" value="Archaea"/>
</dbReference>
<dbReference type="HOGENOM" id="CLU_031223_2_1_2"/>
<dbReference type="UniPathway" id="UPA00109">
    <property type="reaction ID" value="UER00187"/>
</dbReference>
<dbReference type="Proteomes" id="UP000000242">
    <property type="component" value="Chromosome"/>
</dbReference>
<dbReference type="GO" id="GO:0009986">
    <property type="term" value="C:cell surface"/>
    <property type="evidence" value="ECO:0007669"/>
    <property type="project" value="UniProtKB-SubCell"/>
</dbReference>
<dbReference type="GO" id="GO:0005576">
    <property type="term" value="C:extracellular region"/>
    <property type="evidence" value="ECO:0007669"/>
    <property type="project" value="UniProtKB-SubCell"/>
</dbReference>
<dbReference type="GO" id="GO:0000015">
    <property type="term" value="C:phosphopyruvate hydratase complex"/>
    <property type="evidence" value="ECO:0007669"/>
    <property type="project" value="InterPro"/>
</dbReference>
<dbReference type="GO" id="GO:0000287">
    <property type="term" value="F:magnesium ion binding"/>
    <property type="evidence" value="ECO:0007669"/>
    <property type="project" value="UniProtKB-UniRule"/>
</dbReference>
<dbReference type="GO" id="GO:0004634">
    <property type="term" value="F:phosphopyruvate hydratase activity"/>
    <property type="evidence" value="ECO:0007669"/>
    <property type="project" value="UniProtKB-UniRule"/>
</dbReference>
<dbReference type="GO" id="GO:0006096">
    <property type="term" value="P:glycolytic process"/>
    <property type="evidence" value="ECO:0007669"/>
    <property type="project" value="UniProtKB-UniRule"/>
</dbReference>
<dbReference type="CDD" id="cd03313">
    <property type="entry name" value="enolase"/>
    <property type="match status" value="1"/>
</dbReference>
<dbReference type="Gene3D" id="3.20.20.120">
    <property type="entry name" value="Enolase-like C-terminal domain"/>
    <property type="match status" value="1"/>
</dbReference>
<dbReference type="Gene3D" id="3.30.390.10">
    <property type="entry name" value="Enolase-like, N-terminal domain"/>
    <property type="match status" value="1"/>
</dbReference>
<dbReference type="HAMAP" id="MF_00318">
    <property type="entry name" value="Enolase"/>
    <property type="match status" value="1"/>
</dbReference>
<dbReference type="InterPro" id="IPR000941">
    <property type="entry name" value="Enolase"/>
</dbReference>
<dbReference type="InterPro" id="IPR036849">
    <property type="entry name" value="Enolase-like_C_sf"/>
</dbReference>
<dbReference type="InterPro" id="IPR029017">
    <property type="entry name" value="Enolase-like_N"/>
</dbReference>
<dbReference type="InterPro" id="IPR020810">
    <property type="entry name" value="Enolase_C"/>
</dbReference>
<dbReference type="InterPro" id="IPR020809">
    <property type="entry name" value="Enolase_CS"/>
</dbReference>
<dbReference type="InterPro" id="IPR020811">
    <property type="entry name" value="Enolase_N"/>
</dbReference>
<dbReference type="NCBIfam" id="TIGR01060">
    <property type="entry name" value="eno"/>
    <property type="match status" value="1"/>
</dbReference>
<dbReference type="PANTHER" id="PTHR11902">
    <property type="entry name" value="ENOLASE"/>
    <property type="match status" value="1"/>
</dbReference>
<dbReference type="PANTHER" id="PTHR11902:SF1">
    <property type="entry name" value="ENOLASE"/>
    <property type="match status" value="1"/>
</dbReference>
<dbReference type="Pfam" id="PF00113">
    <property type="entry name" value="Enolase_C"/>
    <property type="match status" value="1"/>
</dbReference>
<dbReference type="Pfam" id="PF03952">
    <property type="entry name" value="Enolase_N"/>
    <property type="match status" value="1"/>
</dbReference>
<dbReference type="PIRSF" id="PIRSF001400">
    <property type="entry name" value="Enolase"/>
    <property type="match status" value="1"/>
</dbReference>
<dbReference type="PRINTS" id="PR00148">
    <property type="entry name" value="ENOLASE"/>
</dbReference>
<dbReference type="SFLD" id="SFLDS00001">
    <property type="entry name" value="Enolase"/>
    <property type="match status" value="1"/>
</dbReference>
<dbReference type="SFLD" id="SFLDF00002">
    <property type="entry name" value="enolase"/>
    <property type="match status" value="1"/>
</dbReference>
<dbReference type="SMART" id="SM01192">
    <property type="entry name" value="Enolase_C"/>
    <property type="match status" value="1"/>
</dbReference>
<dbReference type="SMART" id="SM01193">
    <property type="entry name" value="Enolase_N"/>
    <property type="match status" value="1"/>
</dbReference>
<dbReference type="SUPFAM" id="SSF51604">
    <property type="entry name" value="Enolase C-terminal domain-like"/>
    <property type="match status" value="1"/>
</dbReference>
<dbReference type="SUPFAM" id="SSF54826">
    <property type="entry name" value="Enolase N-terminal domain-like"/>
    <property type="match status" value="1"/>
</dbReference>
<dbReference type="PROSITE" id="PS00164">
    <property type="entry name" value="ENOLASE"/>
    <property type="match status" value="1"/>
</dbReference>
<protein>
    <recommendedName>
        <fullName evidence="1">Enolase</fullName>
        <ecNumber evidence="1">4.2.1.11</ecNumber>
    </recommendedName>
    <alternativeName>
        <fullName evidence="1">2-phospho-D-glycerate hydro-lyase</fullName>
    </alternativeName>
    <alternativeName>
        <fullName evidence="1">2-phosphoglycerate dehydratase</fullName>
    </alternativeName>
</protein>
<keyword id="KW-0963">Cytoplasm</keyword>
<keyword id="KW-0324">Glycolysis</keyword>
<keyword id="KW-0456">Lyase</keyword>
<keyword id="KW-0460">Magnesium</keyword>
<keyword id="KW-0479">Metal-binding</keyword>
<keyword id="KW-1185">Reference proteome</keyword>
<keyword id="KW-0964">Secreted</keyword>
<sequence>MMNGFSIANVQGYEIIDSRGNLTVRARVTLESGIRATGDAPSGASKGTREAVELRDKDGSVKGAVDSINYYISPALMGLDVREQGKIDRIMIELDGTENKSRLGANATIATSIAVAKTASISMGLEPFMYIGGARTHTLPVPLLNILNGGLHAGNMLKIQEFMVIPVKFDTLKEALIASTKIYKTLKSLVTERYGKIYTALGDEGGISPPLSVTEDALKLVHEAIKRSGMEGRVFMGMDAAASDFYNPEKGVYEIDNTSKSPDEMIEFYVDIASRYPLLYLEDPFEENDFSRYSELQSRIKNVIVTGDDLFTTNVRYLRKGIEMKSARGVIVKANQIGTLTETIQFFDLAKDNSIKTVVSHRSGETEDSFIADLAVGLNSDFIKTGAPSRGERTSKYNRLLEIENEFGLEYLGRRL</sequence>
<reference key="1">
    <citation type="journal article" date="2008" name="Appl. Environ. Microbiol.">
        <title>The genome sequence of the metal-mobilizing, extremely thermoacidophilic archaeon Metallosphaera sedula provides insights into bioleaching-associated metabolism.</title>
        <authorList>
            <person name="Auernik K.S."/>
            <person name="Maezato Y."/>
            <person name="Blum P.H."/>
            <person name="Kelly R.M."/>
        </authorList>
    </citation>
    <scope>NUCLEOTIDE SEQUENCE [LARGE SCALE GENOMIC DNA]</scope>
    <source>
        <strain>ATCC 51363 / DSM 5348 / JCM 9185 / NBRC 15509 / TH2</strain>
    </source>
</reference>
<comment type="function">
    <text evidence="1">Catalyzes the reversible conversion of 2-phosphoglycerate (2-PG) into phosphoenolpyruvate (PEP). It is essential for the degradation of carbohydrates via glycolysis.</text>
</comment>
<comment type="catalytic activity">
    <reaction evidence="1">
        <text>(2R)-2-phosphoglycerate = phosphoenolpyruvate + H2O</text>
        <dbReference type="Rhea" id="RHEA:10164"/>
        <dbReference type="ChEBI" id="CHEBI:15377"/>
        <dbReference type="ChEBI" id="CHEBI:58289"/>
        <dbReference type="ChEBI" id="CHEBI:58702"/>
        <dbReference type="EC" id="4.2.1.11"/>
    </reaction>
</comment>
<comment type="cofactor">
    <cofactor evidence="1">
        <name>Mg(2+)</name>
        <dbReference type="ChEBI" id="CHEBI:18420"/>
    </cofactor>
    <text evidence="1">Binds a second Mg(2+) ion via substrate during catalysis.</text>
</comment>
<comment type="pathway">
    <text evidence="1">Carbohydrate degradation; glycolysis; pyruvate from D-glyceraldehyde 3-phosphate: step 4/5.</text>
</comment>
<comment type="subcellular location">
    <subcellularLocation>
        <location evidence="1">Cytoplasm</location>
    </subcellularLocation>
    <subcellularLocation>
        <location evidence="1">Secreted</location>
    </subcellularLocation>
    <subcellularLocation>
        <location evidence="1">Cell surface</location>
    </subcellularLocation>
    <text evidence="1">Fractions of enolase are present in both the cytoplasm and on the cell surface.</text>
</comment>
<comment type="similarity">
    <text evidence="1">Belongs to the enolase family.</text>
</comment>